<name>RGRF2_DANRE</name>
<proteinExistence type="inferred from homology"/>
<keyword id="KW-0106">Calcium</keyword>
<keyword id="KW-0112">Calmodulin-binding</keyword>
<keyword id="KW-1003">Cell membrane</keyword>
<keyword id="KW-0175">Coiled coil</keyword>
<keyword id="KW-0963">Cytoplasm</keyword>
<keyword id="KW-0256">Endoplasmic reticulum</keyword>
<keyword id="KW-0344">Guanine-nucleotide releasing factor</keyword>
<keyword id="KW-0472">Membrane</keyword>
<keyword id="KW-1185">Reference proteome</keyword>
<keyword id="KW-0677">Repeat</keyword>
<accession>A2CEA7</accession>
<accession>B0S6A1</accession>
<evidence type="ECO:0000250" key="1"/>
<evidence type="ECO:0000255" key="2"/>
<evidence type="ECO:0000255" key="3">
    <source>
        <dbReference type="PROSITE-ProRule" id="PRU00062"/>
    </source>
</evidence>
<evidence type="ECO:0000255" key="4">
    <source>
        <dbReference type="PROSITE-ProRule" id="PRU00116"/>
    </source>
</evidence>
<evidence type="ECO:0000255" key="5">
    <source>
        <dbReference type="PROSITE-ProRule" id="PRU00135"/>
    </source>
</evidence>
<evidence type="ECO:0000255" key="6">
    <source>
        <dbReference type="PROSITE-ProRule" id="PRU00145"/>
    </source>
</evidence>
<evidence type="ECO:0000255" key="7">
    <source>
        <dbReference type="PROSITE-ProRule" id="PRU00168"/>
    </source>
</evidence>
<evidence type="ECO:0000256" key="8">
    <source>
        <dbReference type="SAM" id="MobiDB-lite"/>
    </source>
</evidence>
<gene>
    <name type="primary">rasgrf2</name>
    <name type="ORF">si:ch211-194b21.1</name>
    <name type="ORF">si:dkey-56d12.3</name>
</gene>
<protein>
    <recommendedName>
        <fullName>Ras-specific guanine nucleotide-releasing factor 2</fullName>
        <shortName>Ras-GRF2</shortName>
    </recommendedName>
    <alternativeName>
        <fullName>Ras guanine nucleotide exchange factor 2</fullName>
    </alternativeName>
</protein>
<feature type="chain" id="PRO_0000312866" description="Ras-specific guanine nucleotide-releasing factor 2">
    <location>
        <begin position="1"/>
        <end position="1244"/>
    </location>
</feature>
<feature type="domain" description="PH 1" evidence="6">
    <location>
        <begin position="22"/>
        <end position="129"/>
    </location>
</feature>
<feature type="domain" description="IQ" evidence="4">
    <location>
        <begin position="201"/>
        <end position="230"/>
    </location>
</feature>
<feature type="domain" description="DH" evidence="3">
    <location>
        <begin position="239"/>
        <end position="425"/>
    </location>
</feature>
<feature type="domain" description="PH 2" evidence="6">
    <location>
        <begin position="466"/>
        <end position="584"/>
    </location>
</feature>
<feature type="domain" description="N-terminal Ras-GEF" evidence="5">
    <location>
        <begin position="631"/>
        <end position="745"/>
    </location>
</feature>
<feature type="domain" description="Ras-GEF" evidence="7">
    <location>
        <begin position="1009"/>
        <end position="1241"/>
    </location>
</feature>
<feature type="region of interest" description="Disordered" evidence="8">
    <location>
        <begin position="704"/>
        <end position="743"/>
    </location>
</feature>
<feature type="region of interest" description="Disordered" evidence="8">
    <location>
        <begin position="759"/>
        <end position="814"/>
    </location>
</feature>
<feature type="region of interest" description="Disordered" evidence="8">
    <location>
        <begin position="843"/>
        <end position="879"/>
    </location>
</feature>
<feature type="coiled-coil region" evidence="2">
    <location>
        <begin position="147"/>
        <end position="189"/>
    </location>
</feature>
<feature type="compositionally biased region" description="Basic and acidic residues" evidence="8">
    <location>
        <begin position="706"/>
        <end position="715"/>
    </location>
</feature>
<feature type="compositionally biased region" description="Polar residues" evidence="8">
    <location>
        <begin position="728"/>
        <end position="743"/>
    </location>
</feature>
<feature type="compositionally biased region" description="Low complexity" evidence="8">
    <location>
        <begin position="759"/>
        <end position="774"/>
    </location>
</feature>
<feature type="compositionally biased region" description="Low complexity" evidence="8">
    <location>
        <begin position="781"/>
        <end position="806"/>
    </location>
</feature>
<sequence>MQKSVRYNEGHALFLSVIARKEGTKRGYLSKKTTENSKWHEKFFALYQNVLFYFDTDQSARPSGIYLLEGCTCERVPALKVSTVGKDALDKLQYFLVVFGHDGQKPLELRTEEESDCDEWVEAIQQASYSDIIIEREVLMQKYIHLVQIVETEKVAANQLRTQLEDQDTEIERLKAEIIALNKTKERMRPYHVFQEEEDPDIKKIKKVQSFMRGWLCRRKWKIIVQDYICSPHAESMRKRNQIVFNMVEAETEYVHQLSILVNCFLRPLRMAASSKKPPISHDDVSSIFLNSETIMFLHEIFHQGLKARIANWPTLVLADLFDILLPMLNIYQEFVRNHQYSLQVLANCKQNRDFDKLLKQYESNAACEGRMLETFLTYPMFQIPRYIITLHELLAHTPHEHVERKSLEFAKSKLEELSRVMHDEVSDTENIRKNLAIERMIVEGCDILLDTSQTFVRQGSLIQLPSVERGKLSKVRLGSLSLKKEGERQCFLFTKHFLICTRSSGGKLHLLKQGGVLSLIECTLIEEPDANDEDAKNSGQVFGHLDFKIVVEPSDAPAFTVVLLAPSRQEKAAWTSDISQCIDNIRCNGLMTSVFEENSKVTVPHMIKSDARLHKDDVDICFSKTLNSCKVPQIRYASVERLLERLTDLRFLSIDFLNTFLHTYRIFTTATVVMEKLADIYKKPFTSIPVRSLELFFATNQNNRSGDHVNDKSPRLCRKFSSPPPLSISSRTSSPVRTRKLSLNSPIGSKVGILDLSTTSSSAASSPTSANPTISPPPSNNNNNSKPPLDLSRGQSPSSPEQSPGALDDNAEVPRIDALCGKLRRSIRRAVLESVSLDKFIPESPQASEPGEISPCRSPSTPRHLRYRQSGVQTAENSRCSVSPASAFAIATAAAGHSSPPVFNNSERTCDKEFIIRRAATNRVLNVLRHWVSKHSQDFEMNGELKMGVICLLEEVLRDPDLLPQERKATANILSALSQDDQDDAQLKIEDILQMAECPKAECFESLSAMEIAEQITLLDHIVFRSIPYEEFLGQGWMKTDKTERTPYIMKTSQHFNDMSNLVASQIMSHTDVGSRAGSIEKWVAVADICRCLNNYNGVLEITSALNRSAIYRLKKTWAKVCKQTKALMDKLQKTVSSEGRFKNLRETLKNCNPPCVPYLGMYLTDLAFIEEGTPNFTEEGLVNFSKMRMISHIIREIRQFQQTPYRIEHQPKVTQYLLDKTLIMDEDTLYDLSLKIEPRLPA</sequence>
<reference key="1">
    <citation type="journal article" date="2013" name="Nature">
        <title>The zebrafish reference genome sequence and its relationship to the human genome.</title>
        <authorList>
            <person name="Howe K."/>
            <person name="Clark M.D."/>
            <person name="Torroja C.F."/>
            <person name="Torrance J."/>
            <person name="Berthelot C."/>
            <person name="Muffato M."/>
            <person name="Collins J.E."/>
            <person name="Humphray S."/>
            <person name="McLaren K."/>
            <person name="Matthews L."/>
            <person name="McLaren S."/>
            <person name="Sealy I."/>
            <person name="Caccamo M."/>
            <person name="Churcher C."/>
            <person name="Scott C."/>
            <person name="Barrett J.C."/>
            <person name="Koch R."/>
            <person name="Rauch G.J."/>
            <person name="White S."/>
            <person name="Chow W."/>
            <person name="Kilian B."/>
            <person name="Quintais L.T."/>
            <person name="Guerra-Assuncao J.A."/>
            <person name="Zhou Y."/>
            <person name="Gu Y."/>
            <person name="Yen J."/>
            <person name="Vogel J.H."/>
            <person name="Eyre T."/>
            <person name="Redmond S."/>
            <person name="Banerjee R."/>
            <person name="Chi J."/>
            <person name="Fu B."/>
            <person name="Langley E."/>
            <person name="Maguire S.F."/>
            <person name="Laird G.K."/>
            <person name="Lloyd D."/>
            <person name="Kenyon E."/>
            <person name="Donaldson S."/>
            <person name="Sehra H."/>
            <person name="Almeida-King J."/>
            <person name="Loveland J."/>
            <person name="Trevanion S."/>
            <person name="Jones M."/>
            <person name="Quail M."/>
            <person name="Willey D."/>
            <person name="Hunt A."/>
            <person name="Burton J."/>
            <person name="Sims S."/>
            <person name="McLay K."/>
            <person name="Plumb B."/>
            <person name="Davis J."/>
            <person name="Clee C."/>
            <person name="Oliver K."/>
            <person name="Clark R."/>
            <person name="Riddle C."/>
            <person name="Elliot D."/>
            <person name="Threadgold G."/>
            <person name="Harden G."/>
            <person name="Ware D."/>
            <person name="Begum S."/>
            <person name="Mortimore B."/>
            <person name="Kerry G."/>
            <person name="Heath P."/>
            <person name="Phillimore B."/>
            <person name="Tracey A."/>
            <person name="Corby N."/>
            <person name="Dunn M."/>
            <person name="Johnson C."/>
            <person name="Wood J."/>
            <person name="Clark S."/>
            <person name="Pelan S."/>
            <person name="Griffiths G."/>
            <person name="Smith M."/>
            <person name="Glithero R."/>
            <person name="Howden P."/>
            <person name="Barker N."/>
            <person name="Lloyd C."/>
            <person name="Stevens C."/>
            <person name="Harley J."/>
            <person name="Holt K."/>
            <person name="Panagiotidis G."/>
            <person name="Lovell J."/>
            <person name="Beasley H."/>
            <person name="Henderson C."/>
            <person name="Gordon D."/>
            <person name="Auger K."/>
            <person name="Wright D."/>
            <person name="Collins J."/>
            <person name="Raisen C."/>
            <person name="Dyer L."/>
            <person name="Leung K."/>
            <person name="Robertson L."/>
            <person name="Ambridge K."/>
            <person name="Leongamornlert D."/>
            <person name="McGuire S."/>
            <person name="Gilderthorp R."/>
            <person name="Griffiths C."/>
            <person name="Manthravadi D."/>
            <person name="Nichol S."/>
            <person name="Barker G."/>
            <person name="Whitehead S."/>
            <person name="Kay M."/>
            <person name="Brown J."/>
            <person name="Murnane C."/>
            <person name="Gray E."/>
            <person name="Humphries M."/>
            <person name="Sycamore N."/>
            <person name="Barker D."/>
            <person name="Saunders D."/>
            <person name="Wallis J."/>
            <person name="Babbage A."/>
            <person name="Hammond S."/>
            <person name="Mashreghi-Mohammadi M."/>
            <person name="Barr L."/>
            <person name="Martin S."/>
            <person name="Wray P."/>
            <person name="Ellington A."/>
            <person name="Matthews N."/>
            <person name="Ellwood M."/>
            <person name="Woodmansey R."/>
            <person name="Clark G."/>
            <person name="Cooper J."/>
            <person name="Tromans A."/>
            <person name="Grafham D."/>
            <person name="Skuce C."/>
            <person name="Pandian R."/>
            <person name="Andrews R."/>
            <person name="Harrison E."/>
            <person name="Kimberley A."/>
            <person name="Garnett J."/>
            <person name="Fosker N."/>
            <person name="Hall R."/>
            <person name="Garner P."/>
            <person name="Kelly D."/>
            <person name="Bird C."/>
            <person name="Palmer S."/>
            <person name="Gehring I."/>
            <person name="Berger A."/>
            <person name="Dooley C.M."/>
            <person name="Ersan-Urun Z."/>
            <person name="Eser C."/>
            <person name="Geiger H."/>
            <person name="Geisler M."/>
            <person name="Karotki L."/>
            <person name="Kirn A."/>
            <person name="Konantz J."/>
            <person name="Konantz M."/>
            <person name="Oberlander M."/>
            <person name="Rudolph-Geiger S."/>
            <person name="Teucke M."/>
            <person name="Lanz C."/>
            <person name="Raddatz G."/>
            <person name="Osoegawa K."/>
            <person name="Zhu B."/>
            <person name="Rapp A."/>
            <person name="Widaa S."/>
            <person name="Langford C."/>
            <person name="Yang F."/>
            <person name="Schuster S.C."/>
            <person name="Carter N.P."/>
            <person name="Harrow J."/>
            <person name="Ning Z."/>
            <person name="Herrero J."/>
            <person name="Searle S.M."/>
            <person name="Enright A."/>
            <person name="Geisler R."/>
            <person name="Plasterk R.H."/>
            <person name="Lee C."/>
            <person name="Westerfield M."/>
            <person name="de Jong P.J."/>
            <person name="Zon L.I."/>
            <person name="Postlethwait J.H."/>
            <person name="Nusslein-Volhard C."/>
            <person name="Hubbard T.J."/>
            <person name="Roest Crollius H."/>
            <person name="Rogers J."/>
            <person name="Stemple D.L."/>
        </authorList>
    </citation>
    <scope>NUCLEOTIDE SEQUENCE [LARGE SCALE GENOMIC DNA]</scope>
    <source>
        <strain>Tuebingen</strain>
    </source>
</reference>
<comment type="function">
    <text>Functions as a calcium-regulated nucleotide exchange factor activating both Ras and rac1 through the exchange of bound GDP for GTP. May function in synaptic plasticity.</text>
</comment>
<comment type="subcellular location">
    <subcellularLocation>
        <location evidence="1">Cytoplasm</location>
    </subcellularLocation>
    <subcellularLocation>
        <location evidence="1">Cell membrane</location>
        <topology evidence="1">Peripheral membrane protein</topology>
    </subcellularLocation>
    <subcellularLocation>
        <location evidence="1">Endoplasmic reticulum membrane</location>
        <topology evidence="1">Peripheral membrane protein</topology>
    </subcellularLocation>
</comment>
<comment type="domain">
    <text evidence="1">The Ras-GEF domain and the N-terminal Ras-GEF domain mediate Ras activation.</text>
</comment>
<comment type="domain">
    <text evidence="1">The IQ domain is dispensable for the Ras-GEF activity.</text>
</comment>
<comment type="domain">
    <text evidence="1">The DH (DBL-homology) domain is required for rac1 activation.</text>
</comment>
<dbReference type="EMBL" id="BX470070">
    <property type="protein sequence ID" value="CAQ13408.1"/>
    <property type="molecule type" value="Genomic_DNA"/>
</dbReference>
<dbReference type="EMBL" id="CR848716">
    <property type="protein sequence ID" value="CAQ13408.1"/>
    <property type="status" value="JOINED"/>
    <property type="molecule type" value="Genomic_DNA"/>
</dbReference>
<dbReference type="EMBL" id="CR388055">
    <property type="protein sequence ID" value="CAM16158.1"/>
    <property type="molecule type" value="Genomic_DNA"/>
</dbReference>
<dbReference type="RefSeq" id="NP_001121705.1">
    <property type="nucleotide sequence ID" value="NM_001128233.1"/>
</dbReference>
<dbReference type="SMR" id="A2CEA7"/>
<dbReference type="FunCoup" id="A2CEA7">
    <property type="interactions" value="957"/>
</dbReference>
<dbReference type="STRING" id="7955.ENSDARP00000077785"/>
<dbReference type="PaxDb" id="7955-ENSDARP00000077785"/>
<dbReference type="Ensembl" id="ENSDART00000083350">
    <property type="protein sequence ID" value="ENSDARP00000077785"/>
    <property type="gene ID" value="ENSDARG00000002816"/>
</dbReference>
<dbReference type="GeneID" id="553520"/>
<dbReference type="KEGG" id="dre:553520"/>
<dbReference type="AGR" id="ZFIN:ZDB-GENE-060504-1"/>
<dbReference type="CTD" id="553520"/>
<dbReference type="ZFIN" id="ZDB-GENE-060504-1">
    <property type="gene designation" value="rasgrf2b"/>
</dbReference>
<dbReference type="eggNOG" id="KOG3417">
    <property type="taxonomic scope" value="Eukaryota"/>
</dbReference>
<dbReference type="HOGENOM" id="CLU_003405_0_1_1"/>
<dbReference type="InParanoid" id="A2CEA7"/>
<dbReference type="OMA" id="NYWASRR"/>
<dbReference type="OrthoDB" id="10254377at2759"/>
<dbReference type="PhylomeDB" id="A2CEA7"/>
<dbReference type="TreeFam" id="TF317296"/>
<dbReference type="Reactome" id="R-DRE-193648">
    <property type="pathway name" value="NRAGE signals death through JNK"/>
</dbReference>
<dbReference type="Reactome" id="R-DRE-416482">
    <property type="pathway name" value="G alpha (12/13) signalling events"/>
</dbReference>
<dbReference type="Reactome" id="R-DRE-5673001">
    <property type="pathway name" value="RAF/MAP kinase cascade"/>
</dbReference>
<dbReference type="Reactome" id="R-DRE-8980692">
    <property type="pathway name" value="RHOA GTPase cycle"/>
</dbReference>
<dbReference type="Reactome" id="R-DRE-9013148">
    <property type="pathway name" value="CDC42 GTPase cycle"/>
</dbReference>
<dbReference type="Reactome" id="R-DRE-9013149">
    <property type="pathway name" value="RAC1 GTPase cycle"/>
</dbReference>
<dbReference type="PRO" id="PR:A2CEA7"/>
<dbReference type="Proteomes" id="UP000000437">
    <property type="component" value="Alternate scaffold 5"/>
</dbReference>
<dbReference type="Proteomes" id="UP000000437">
    <property type="component" value="Chromosome 5"/>
</dbReference>
<dbReference type="Bgee" id="ENSDARG00000002816">
    <property type="expression patterns" value="Expressed in retina and 3 other cell types or tissues"/>
</dbReference>
<dbReference type="GO" id="GO:0005789">
    <property type="term" value="C:endoplasmic reticulum membrane"/>
    <property type="evidence" value="ECO:0007669"/>
    <property type="project" value="UniProtKB-SubCell"/>
</dbReference>
<dbReference type="GO" id="GO:0005886">
    <property type="term" value="C:plasma membrane"/>
    <property type="evidence" value="ECO:0000318"/>
    <property type="project" value="GO_Central"/>
</dbReference>
<dbReference type="GO" id="GO:0005516">
    <property type="term" value="F:calmodulin binding"/>
    <property type="evidence" value="ECO:0007669"/>
    <property type="project" value="UniProtKB-KW"/>
</dbReference>
<dbReference type="GO" id="GO:0005085">
    <property type="term" value="F:guanyl-nucleotide exchange factor activity"/>
    <property type="evidence" value="ECO:0000318"/>
    <property type="project" value="GO_Central"/>
</dbReference>
<dbReference type="GO" id="GO:0007265">
    <property type="term" value="P:Ras protein signal transduction"/>
    <property type="evidence" value="ECO:0000318"/>
    <property type="project" value="GO_Central"/>
</dbReference>
<dbReference type="CDD" id="cd13261">
    <property type="entry name" value="PH_RasGRF1_2"/>
    <property type="match status" value="1"/>
</dbReference>
<dbReference type="CDD" id="cd00155">
    <property type="entry name" value="RasGEF"/>
    <property type="match status" value="1"/>
</dbReference>
<dbReference type="CDD" id="cd06224">
    <property type="entry name" value="REM"/>
    <property type="match status" value="1"/>
</dbReference>
<dbReference type="CDD" id="cd00160">
    <property type="entry name" value="RhoGEF"/>
    <property type="match status" value="1"/>
</dbReference>
<dbReference type="FunFam" id="1.20.870.10:FF:000004">
    <property type="entry name" value="Ras-specific guanine nucleotide-releasing factor 1 isoform 2"/>
    <property type="match status" value="1"/>
</dbReference>
<dbReference type="FunFam" id="1.20.900.10:FF:000005">
    <property type="entry name" value="Ras-specific guanine nucleotide-releasing factor 1 isoform 2"/>
    <property type="match status" value="1"/>
</dbReference>
<dbReference type="FunFam" id="1.20.870.10:FF:000006">
    <property type="entry name" value="ras-specific guanine nucleotide-releasing factor 1 isoform X1"/>
    <property type="match status" value="1"/>
</dbReference>
<dbReference type="FunFam" id="2.30.29.30:FF:000117">
    <property type="entry name" value="ras-specific guanine nucleotide-releasing factor 1 isoform X2"/>
    <property type="match status" value="1"/>
</dbReference>
<dbReference type="FunFam" id="2.30.29.30:FF:000176">
    <property type="entry name" value="ras-specific guanine nucleotide-releasing factor 1 isoform X2"/>
    <property type="match status" value="1"/>
</dbReference>
<dbReference type="FunFam" id="1.10.840.10:FF:000004">
    <property type="entry name" value="ras-specific guanine nucleotide-releasing factor 2 isoform X1"/>
    <property type="match status" value="1"/>
</dbReference>
<dbReference type="Gene3D" id="1.20.900.10">
    <property type="entry name" value="Dbl homology (DH) domain"/>
    <property type="match status" value="1"/>
</dbReference>
<dbReference type="Gene3D" id="2.30.29.30">
    <property type="entry name" value="Pleckstrin-homology domain (PH domain)/Phosphotyrosine-binding domain (PTB)"/>
    <property type="match status" value="2"/>
</dbReference>
<dbReference type="Gene3D" id="1.10.840.10">
    <property type="entry name" value="Ras guanine-nucleotide exchange factors catalytic domain"/>
    <property type="match status" value="1"/>
</dbReference>
<dbReference type="Gene3D" id="1.20.870.10">
    <property type="entry name" value="Son of sevenless (SoS) protein Chain: S domain 1"/>
    <property type="match status" value="1"/>
</dbReference>
<dbReference type="InterPro" id="IPR035899">
    <property type="entry name" value="DBL_dom_sf"/>
</dbReference>
<dbReference type="InterPro" id="IPR000219">
    <property type="entry name" value="DH_dom"/>
</dbReference>
<dbReference type="InterPro" id="IPR011993">
    <property type="entry name" value="PH-like_dom_sf"/>
</dbReference>
<dbReference type="InterPro" id="IPR001849">
    <property type="entry name" value="PH_domain"/>
</dbReference>
<dbReference type="InterPro" id="IPR008937">
    <property type="entry name" value="Ras-like_GEF"/>
</dbReference>
<dbReference type="InterPro" id="IPR000651">
    <property type="entry name" value="Ras-like_Gua-exchang_fac_N"/>
</dbReference>
<dbReference type="InterPro" id="IPR019804">
    <property type="entry name" value="Ras_G-nucl-exch_fac_CS"/>
</dbReference>
<dbReference type="InterPro" id="IPR023578">
    <property type="entry name" value="Ras_GEF_dom_sf"/>
</dbReference>
<dbReference type="InterPro" id="IPR001895">
    <property type="entry name" value="RASGEF_cat_dom"/>
</dbReference>
<dbReference type="InterPro" id="IPR036964">
    <property type="entry name" value="RASGEF_cat_dom_sf"/>
</dbReference>
<dbReference type="PANTHER" id="PTHR23113">
    <property type="entry name" value="GUANINE NUCLEOTIDE EXCHANGE FACTOR"/>
    <property type="match status" value="1"/>
</dbReference>
<dbReference type="PANTHER" id="PTHR23113:SF187">
    <property type="entry name" value="RAS-SPECIFIC GUANINE NUCLEOTIDE-RELEASING FACTOR 2"/>
    <property type="match status" value="1"/>
</dbReference>
<dbReference type="Pfam" id="PF00169">
    <property type="entry name" value="PH"/>
    <property type="match status" value="1"/>
</dbReference>
<dbReference type="Pfam" id="PF00617">
    <property type="entry name" value="RasGEF"/>
    <property type="match status" value="1"/>
</dbReference>
<dbReference type="Pfam" id="PF00618">
    <property type="entry name" value="RasGEF_N"/>
    <property type="match status" value="1"/>
</dbReference>
<dbReference type="Pfam" id="PF00621">
    <property type="entry name" value="RhoGEF"/>
    <property type="match status" value="1"/>
</dbReference>
<dbReference type="SMART" id="SM00233">
    <property type="entry name" value="PH"/>
    <property type="match status" value="2"/>
</dbReference>
<dbReference type="SMART" id="SM00147">
    <property type="entry name" value="RasGEF"/>
    <property type="match status" value="1"/>
</dbReference>
<dbReference type="SMART" id="SM00229">
    <property type="entry name" value="RasGEFN"/>
    <property type="match status" value="2"/>
</dbReference>
<dbReference type="SMART" id="SM00325">
    <property type="entry name" value="RhoGEF"/>
    <property type="match status" value="1"/>
</dbReference>
<dbReference type="SUPFAM" id="SSF48065">
    <property type="entry name" value="DBL homology domain (DH-domain)"/>
    <property type="match status" value="1"/>
</dbReference>
<dbReference type="SUPFAM" id="SSF50729">
    <property type="entry name" value="PH domain-like"/>
    <property type="match status" value="2"/>
</dbReference>
<dbReference type="SUPFAM" id="SSF48366">
    <property type="entry name" value="Ras GEF"/>
    <property type="match status" value="1"/>
</dbReference>
<dbReference type="PROSITE" id="PS50010">
    <property type="entry name" value="DH_2"/>
    <property type="match status" value="1"/>
</dbReference>
<dbReference type="PROSITE" id="PS50096">
    <property type="entry name" value="IQ"/>
    <property type="match status" value="1"/>
</dbReference>
<dbReference type="PROSITE" id="PS50003">
    <property type="entry name" value="PH_DOMAIN"/>
    <property type="match status" value="2"/>
</dbReference>
<dbReference type="PROSITE" id="PS00720">
    <property type="entry name" value="RASGEF"/>
    <property type="match status" value="1"/>
</dbReference>
<dbReference type="PROSITE" id="PS50009">
    <property type="entry name" value="RASGEF_CAT"/>
    <property type="match status" value="1"/>
</dbReference>
<dbReference type="PROSITE" id="PS50212">
    <property type="entry name" value="RASGEF_NTER"/>
    <property type="match status" value="1"/>
</dbReference>
<organism>
    <name type="scientific">Danio rerio</name>
    <name type="common">Zebrafish</name>
    <name type="synonym">Brachydanio rerio</name>
    <dbReference type="NCBI Taxonomy" id="7955"/>
    <lineage>
        <taxon>Eukaryota</taxon>
        <taxon>Metazoa</taxon>
        <taxon>Chordata</taxon>
        <taxon>Craniata</taxon>
        <taxon>Vertebrata</taxon>
        <taxon>Euteleostomi</taxon>
        <taxon>Actinopterygii</taxon>
        <taxon>Neopterygii</taxon>
        <taxon>Teleostei</taxon>
        <taxon>Ostariophysi</taxon>
        <taxon>Cypriniformes</taxon>
        <taxon>Danionidae</taxon>
        <taxon>Danioninae</taxon>
        <taxon>Danio</taxon>
    </lineage>
</organism>